<comment type="function">
    <text evidence="1">Catalyzes the attachment of alanine to tRNA(Ala) in a two-step reaction: alanine is first activated by ATP to form Ala-AMP and then transferred to the acceptor end of tRNA(Ala). Also edits incorrectly charged Ser-tRNA(Ala) and Gly-tRNA(Ala) via its editing domain.</text>
</comment>
<comment type="catalytic activity">
    <reaction evidence="1">
        <text>tRNA(Ala) + L-alanine + ATP = L-alanyl-tRNA(Ala) + AMP + diphosphate</text>
        <dbReference type="Rhea" id="RHEA:12540"/>
        <dbReference type="Rhea" id="RHEA-COMP:9657"/>
        <dbReference type="Rhea" id="RHEA-COMP:9923"/>
        <dbReference type="ChEBI" id="CHEBI:30616"/>
        <dbReference type="ChEBI" id="CHEBI:33019"/>
        <dbReference type="ChEBI" id="CHEBI:57972"/>
        <dbReference type="ChEBI" id="CHEBI:78442"/>
        <dbReference type="ChEBI" id="CHEBI:78497"/>
        <dbReference type="ChEBI" id="CHEBI:456215"/>
        <dbReference type="EC" id="6.1.1.7"/>
    </reaction>
</comment>
<comment type="cofactor">
    <cofactor evidence="1">
        <name>Zn(2+)</name>
        <dbReference type="ChEBI" id="CHEBI:29105"/>
    </cofactor>
    <text evidence="1">Binds 1 zinc ion per subunit.</text>
</comment>
<comment type="subcellular location">
    <subcellularLocation>
        <location evidence="1">Cytoplasm</location>
    </subcellularLocation>
</comment>
<comment type="domain">
    <text evidence="1">Consists of three domains; the N-terminal catalytic domain, the editing domain and the C-terminal C-Ala domain. The editing domain removes incorrectly charged amino acids, while the C-Ala domain, along with tRNA(Ala), serves as a bridge to cooperatively bring together the editing and aminoacylation centers thus stimulating deacylation of misacylated tRNAs.</text>
</comment>
<comment type="similarity">
    <text evidence="1">Belongs to the class-II aminoacyl-tRNA synthetase family.</text>
</comment>
<organism>
    <name type="scientific">Aquifex pyrophilus</name>
    <dbReference type="NCBI Taxonomy" id="2714"/>
    <lineage>
        <taxon>Bacteria</taxon>
        <taxon>Pseudomonadati</taxon>
        <taxon>Aquificota</taxon>
        <taxon>Aquificia</taxon>
        <taxon>Aquificales</taxon>
        <taxon>Aquificaceae</taxon>
        <taxon>Aquifex</taxon>
    </lineage>
</organism>
<accession>Q9XDM3</accession>
<reference key="1">
    <citation type="journal article" date="1999" name="J. Mol. Evol.">
        <title>RNA polymerase of Aquifex pyrophilus: implications for the evolution of the bacterial rpoBC operon and extremely thermophilic bacteria.</title>
        <authorList>
            <person name="Klenk H.-P."/>
            <person name="Meier T.D."/>
            <person name="Durovic P."/>
            <person name="Schwass V."/>
            <person name="Lottspeich F."/>
            <person name="Dennis P.P."/>
            <person name="Zillig W."/>
        </authorList>
    </citation>
    <scope>NUCLEOTIDE SEQUENCE [GENOMIC DNA]</scope>
    <source>
        <strain>DSM 6858 / JCM 9492 / Kol5A</strain>
    </source>
</reference>
<sequence length="871" mass="99395">MGFSAHEIRELFLSFFEKKGHTRVKSAPLVPENDPTLLFVNAGMVPFKNVFLGLEKRPYKRATSCQKCLRVSGKHNDLEQVGYTSRHHTFFEMLGNFSFGDYFKKEAIEYAWEFVTEVLKLPKERLYVSVYKDDEEAYRIWNEHIGIPSERIWRLGEEDNFWQMGDTGPCGPSSEIYVDRGEEYEGEERYLEIWNLVFMQYNRDENGVLTPLPHPNIDTGMGLERIASVLQGKNSNFEIDIIYPLIEFGEEVSGKKYGEKFETDVALRVIADHLRAITFAISDGVIPSNEGRGYVIRRILRRAMRFGYQLGITEPFLYKGIDLVVDIMKEPYPELELSRDFVKGIVKGEEERFIRTLRSGMEYIQEVIEKALSEGRKTLTGKEVFTAYDTYGFPVDLIQEIAKEKGLEIDLEGFQCELEEQRERARKSFKIETKEVKPVYAHLKELGITSRFVGYEHLEYETEVLGIIVGDEIVSEIKEGEEGEIILRETPFYPEGGGQIGDSGIIETDKGIFKVEDTQRPTEGIIVHIGKLLKGKISVKDIVHARVDKERRWDIMRNHTATHLLHAALRNLLGEHVRQAGSLVADKYLRFDFTHFSPLTEEEIKRIEELVNEKIRENLPVSVMEMAYQEALQTGAIAIFEEKYGERVRVISCGEFSKELCGGTHVSATGDIGYFKIISESSVGAGVRRIVAQTGRWAVNTAFEEHTTLKKVSNALGVKEDEVVQKVEELKEEIKEKEKEIQKLRQEILKLQIREKVKEERHRELTLYYGVFEDVEPEELRNLADILRQRTGKDVVFIASKKEGKINFVIASSKGISKEVRANELIRQVGKVLKGGGGGREDLAQGGGKAPDKFDESVKLLKELLSGVSVG</sequence>
<evidence type="ECO:0000255" key="1">
    <source>
        <dbReference type="HAMAP-Rule" id="MF_00036"/>
    </source>
</evidence>
<feature type="chain" id="PRO_0000075048" description="Alanine--tRNA ligase">
    <location>
        <begin position="1"/>
        <end position="871"/>
    </location>
</feature>
<feature type="binding site" evidence="1">
    <location>
        <position position="559"/>
    </location>
    <ligand>
        <name>Zn(2+)</name>
        <dbReference type="ChEBI" id="CHEBI:29105"/>
    </ligand>
</feature>
<feature type="binding site" evidence="1">
    <location>
        <position position="563"/>
    </location>
    <ligand>
        <name>Zn(2+)</name>
        <dbReference type="ChEBI" id="CHEBI:29105"/>
    </ligand>
</feature>
<feature type="binding site" evidence="1">
    <location>
        <position position="661"/>
    </location>
    <ligand>
        <name>Zn(2+)</name>
        <dbReference type="ChEBI" id="CHEBI:29105"/>
    </ligand>
</feature>
<feature type="binding site" evidence="1">
    <location>
        <position position="665"/>
    </location>
    <ligand>
        <name>Zn(2+)</name>
        <dbReference type="ChEBI" id="CHEBI:29105"/>
    </ligand>
</feature>
<protein>
    <recommendedName>
        <fullName evidence="1">Alanine--tRNA ligase</fullName>
        <ecNumber evidence="1">6.1.1.7</ecNumber>
    </recommendedName>
    <alternativeName>
        <fullName evidence="1">Alanyl-tRNA synthetase</fullName>
        <shortName evidence="1">AlaRS</shortName>
    </alternativeName>
</protein>
<gene>
    <name evidence="1" type="primary">alaS</name>
</gene>
<keyword id="KW-0030">Aminoacyl-tRNA synthetase</keyword>
<keyword id="KW-0067">ATP-binding</keyword>
<keyword id="KW-0963">Cytoplasm</keyword>
<keyword id="KW-0436">Ligase</keyword>
<keyword id="KW-0479">Metal-binding</keyword>
<keyword id="KW-0547">Nucleotide-binding</keyword>
<keyword id="KW-0648">Protein biosynthesis</keyword>
<keyword id="KW-0694">RNA-binding</keyword>
<keyword id="KW-0820">tRNA-binding</keyword>
<keyword id="KW-0862">Zinc</keyword>
<name>SYA_AQUPY</name>
<dbReference type="EC" id="6.1.1.7" evidence="1"/>
<dbReference type="EMBL" id="AF027500">
    <property type="protein sequence ID" value="AAD25871.1"/>
    <property type="molecule type" value="Genomic_DNA"/>
</dbReference>
<dbReference type="SMR" id="Q9XDM3"/>
<dbReference type="GO" id="GO:0005829">
    <property type="term" value="C:cytosol"/>
    <property type="evidence" value="ECO:0007669"/>
    <property type="project" value="TreeGrafter"/>
</dbReference>
<dbReference type="GO" id="GO:0004813">
    <property type="term" value="F:alanine-tRNA ligase activity"/>
    <property type="evidence" value="ECO:0007669"/>
    <property type="project" value="UniProtKB-UniRule"/>
</dbReference>
<dbReference type="GO" id="GO:0002161">
    <property type="term" value="F:aminoacyl-tRNA deacylase activity"/>
    <property type="evidence" value="ECO:0007669"/>
    <property type="project" value="TreeGrafter"/>
</dbReference>
<dbReference type="GO" id="GO:0005524">
    <property type="term" value="F:ATP binding"/>
    <property type="evidence" value="ECO:0007669"/>
    <property type="project" value="UniProtKB-UniRule"/>
</dbReference>
<dbReference type="GO" id="GO:0000049">
    <property type="term" value="F:tRNA binding"/>
    <property type="evidence" value="ECO:0007669"/>
    <property type="project" value="UniProtKB-KW"/>
</dbReference>
<dbReference type="GO" id="GO:0008270">
    <property type="term" value="F:zinc ion binding"/>
    <property type="evidence" value="ECO:0007669"/>
    <property type="project" value="UniProtKB-UniRule"/>
</dbReference>
<dbReference type="GO" id="GO:0006419">
    <property type="term" value="P:alanyl-tRNA aminoacylation"/>
    <property type="evidence" value="ECO:0007669"/>
    <property type="project" value="UniProtKB-UniRule"/>
</dbReference>
<dbReference type="CDD" id="cd00673">
    <property type="entry name" value="AlaRS_core"/>
    <property type="match status" value="1"/>
</dbReference>
<dbReference type="FunFam" id="2.40.30.130:FF:000001">
    <property type="entry name" value="Alanine--tRNA ligase"/>
    <property type="match status" value="1"/>
</dbReference>
<dbReference type="FunFam" id="3.10.310.40:FF:000001">
    <property type="entry name" value="Alanine--tRNA ligase"/>
    <property type="match status" value="1"/>
</dbReference>
<dbReference type="FunFam" id="3.30.54.20:FF:000001">
    <property type="entry name" value="Alanine--tRNA ligase"/>
    <property type="match status" value="1"/>
</dbReference>
<dbReference type="FunFam" id="3.30.930.10:FF:000004">
    <property type="entry name" value="Alanine--tRNA ligase"/>
    <property type="match status" value="1"/>
</dbReference>
<dbReference type="FunFam" id="3.30.980.10:FF:000004">
    <property type="entry name" value="Alanine--tRNA ligase, cytoplasmic"/>
    <property type="match status" value="1"/>
</dbReference>
<dbReference type="Gene3D" id="2.40.30.130">
    <property type="match status" value="1"/>
</dbReference>
<dbReference type="Gene3D" id="3.10.310.40">
    <property type="match status" value="1"/>
</dbReference>
<dbReference type="Gene3D" id="3.30.54.20">
    <property type="match status" value="1"/>
</dbReference>
<dbReference type="Gene3D" id="6.10.250.550">
    <property type="match status" value="1"/>
</dbReference>
<dbReference type="Gene3D" id="3.30.930.10">
    <property type="entry name" value="Bira Bifunctional Protein, Domain 2"/>
    <property type="match status" value="1"/>
</dbReference>
<dbReference type="Gene3D" id="3.30.980.10">
    <property type="entry name" value="Threonyl-trna Synthetase, Chain A, domain 2"/>
    <property type="match status" value="1"/>
</dbReference>
<dbReference type="HAMAP" id="MF_00036_B">
    <property type="entry name" value="Ala_tRNA_synth_B"/>
    <property type="match status" value="1"/>
</dbReference>
<dbReference type="InterPro" id="IPR045864">
    <property type="entry name" value="aa-tRNA-synth_II/BPL/LPL"/>
</dbReference>
<dbReference type="InterPro" id="IPR002318">
    <property type="entry name" value="Ala-tRNA-lgiase_IIc"/>
</dbReference>
<dbReference type="InterPro" id="IPR018162">
    <property type="entry name" value="Ala-tRNA-ligase_IIc_anticod-bd"/>
</dbReference>
<dbReference type="InterPro" id="IPR018165">
    <property type="entry name" value="Ala-tRNA-synth_IIc_core"/>
</dbReference>
<dbReference type="InterPro" id="IPR018164">
    <property type="entry name" value="Ala-tRNA-synth_IIc_N"/>
</dbReference>
<dbReference type="InterPro" id="IPR050058">
    <property type="entry name" value="Ala-tRNA_ligase"/>
</dbReference>
<dbReference type="InterPro" id="IPR023033">
    <property type="entry name" value="Ala_tRNA_ligase_euk/bac"/>
</dbReference>
<dbReference type="InterPro" id="IPR003156">
    <property type="entry name" value="DHHA1_dom"/>
</dbReference>
<dbReference type="InterPro" id="IPR018163">
    <property type="entry name" value="Thr/Ala-tRNA-synth_IIc_edit"/>
</dbReference>
<dbReference type="InterPro" id="IPR009000">
    <property type="entry name" value="Transl_B-barrel_sf"/>
</dbReference>
<dbReference type="InterPro" id="IPR012947">
    <property type="entry name" value="tRNA_SAD"/>
</dbReference>
<dbReference type="NCBIfam" id="TIGR00344">
    <property type="entry name" value="alaS"/>
    <property type="match status" value="1"/>
</dbReference>
<dbReference type="PANTHER" id="PTHR11777:SF9">
    <property type="entry name" value="ALANINE--TRNA LIGASE, CYTOPLASMIC"/>
    <property type="match status" value="1"/>
</dbReference>
<dbReference type="PANTHER" id="PTHR11777">
    <property type="entry name" value="ALANYL-TRNA SYNTHETASE"/>
    <property type="match status" value="1"/>
</dbReference>
<dbReference type="Pfam" id="PF02272">
    <property type="entry name" value="DHHA1"/>
    <property type="match status" value="1"/>
</dbReference>
<dbReference type="Pfam" id="PF01411">
    <property type="entry name" value="tRNA-synt_2c"/>
    <property type="match status" value="1"/>
</dbReference>
<dbReference type="Pfam" id="PF07973">
    <property type="entry name" value="tRNA_SAD"/>
    <property type="match status" value="1"/>
</dbReference>
<dbReference type="PRINTS" id="PR00980">
    <property type="entry name" value="TRNASYNTHALA"/>
</dbReference>
<dbReference type="SMART" id="SM00863">
    <property type="entry name" value="tRNA_SAD"/>
    <property type="match status" value="1"/>
</dbReference>
<dbReference type="SUPFAM" id="SSF55681">
    <property type="entry name" value="Class II aaRS and biotin synthetases"/>
    <property type="match status" value="1"/>
</dbReference>
<dbReference type="SUPFAM" id="SSF101353">
    <property type="entry name" value="Putative anticodon-binding domain of alanyl-tRNA synthetase (AlaRS)"/>
    <property type="match status" value="1"/>
</dbReference>
<dbReference type="SUPFAM" id="SSF55186">
    <property type="entry name" value="ThrRS/AlaRS common domain"/>
    <property type="match status" value="1"/>
</dbReference>
<dbReference type="SUPFAM" id="SSF50447">
    <property type="entry name" value="Translation proteins"/>
    <property type="match status" value="1"/>
</dbReference>
<dbReference type="PROSITE" id="PS50860">
    <property type="entry name" value="AA_TRNA_LIGASE_II_ALA"/>
    <property type="match status" value="1"/>
</dbReference>
<proteinExistence type="inferred from homology"/>